<geneLocation type="plasmid">
    <name>pAO1</name>
</geneLocation>
<feature type="chain" id="PRO_0000459754" description="Nicotine 6-hydroxylase small subunit">
    <location>
        <begin position="1"/>
        <end position="165"/>
    </location>
</feature>
<feature type="domain" description="2Fe-2S ferredoxin-type" evidence="1">
    <location>
        <begin position="10"/>
        <end position="86"/>
    </location>
</feature>
<feature type="binding site" evidence="1">
    <location>
        <position position="48"/>
    </location>
    <ligand>
        <name>[2Fe-2S] cluster</name>
        <dbReference type="ChEBI" id="CHEBI:190135"/>
    </ligand>
</feature>
<feature type="binding site" evidence="1">
    <location>
        <position position="53"/>
    </location>
    <ligand>
        <name>[2Fe-2S] cluster</name>
        <dbReference type="ChEBI" id="CHEBI:190135"/>
    </ligand>
</feature>
<feature type="binding site" evidence="1">
    <location>
        <position position="56"/>
    </location>
    <ligand>
        <name>[2Fe-2S] cluster</name>
        <dbReference type="ChEBI" id="CHEBI:190135"/>
    </ligand>
</feature>
<feature type="binding site" evidence="1">
    <location>
        <position position="68"/>
    </location>
    <ligand>
        <name>[2Fe-2S] cluster</name>
        <dbReference type="ChEBI" id="CHEBI:190135"/>
    </ligand>
</feature>
<proteinExistence type="evidence at protein level"/>
<protein>
    <recommendedName>
        <fullName evidence="7">Nicotine 6-hydroxylase small subunit</fullName>
        <ecNumber evidence="2 3">1.5.99.4</ecNumber>
    </recommendedName>
    <alternativeName>
        <fullName evidence="4">Nicotine dehydrogenase small subunit</fullName>
    </alternativeName>
    <alternativeName>
        <fullName evidence="6">Nicotine dehydrogenase subunit B</fullName>
        <shortName evidence="6">NDH B</shortName>
    </alternativeName>
</protein>
<gene>
    <name evidence="4" type="primary">ndhS</name>
    <name evidence="6" type="synonym">ndhB</name>
</gene>
<dbReference type="EC" id="1.5.99.4" evidence="2 3"/>
<dbReference type="EMBL" id="X75338">
    <property type="protein sequence ID" value="CAA53087.1"/>
    <property type="molecule type" value="Genomic_DNA"/>
</dbReference>
<dbReference type="EMBL" id="AF373840">
    <property type="protein sequence ID" value="AAK64244.1"/>
    <property type="molecule type" value="Genomic_DNA"/>
</dbReference>
<dbReference type="EMBL" id="AJ507836">
    <property type="protein sequence ID" value="CAD47953.1"/>
    <property type="molecule type" value="Genomic_DNA"/>
</dbReference>
<dbReference type="PIR" id="I39626">
    <property type="entry name" value="I39626"/>
</dbReference>
<dbReference type="RefSeq" id="WP_016359464.1">
    <property type="nucleotide sequence ID" value="NC_021229.1"/>
</dbReference>
<dbReference type="RefSeq" id="YP_007988779.1">
    <property type="nucleotide sequence ID" value="NC_021229.1"/>
</dbReference>
<dbReference type="SMR" id="Q59128"/>
<dbReference type="KEGG" id="ag:CAA53087"/>
<dbReference type="BioCyc" id="MetaCyc:MONOMER-962"/>
<dbReference type="BRENDA" id="1.5.99.4">
    <property type="organism ID" value="449"/>
</dbReference>
<dbReference type="UniPathway" id="UPA00106">
    <property type="reaction ID" value="UER00487"/>
</dbReference>
<dbReference type="UniPathway" id="UPA00106">
    <property type="reaction ID" value="UER00918"/>
</dbReference>
<dbReference type="GO" id="GO:0005737">
    <property type="term" value="C:cytoplasm"/>
    <property type="evidence" value="ECO:0007669"/>
    <property type="project" value="UniProtKB-SubCell"/>
</dbReference>
<dbReference type="GO" id="GO:0051537">
    <property type="term" value="F:2 iron, 2 sulfur cluster binding"/>
    <property type="evidence" value="ECO:0007669"/>
    <property type="project" value="UniProtKB-KW"/>
</dbReference>
<dbReference type="GO" id="GO:0046872">
    <property type="term" value="F:metal ion binding"/>
    <property type="evidence" value="ECO:0007669"/>
    <property type="project" value="UniProtKB-KW"/>
</dbReference>
<dbReference type="GO" id="GO:0018535">
    <property type="term" value="F:nicotine dehydrogenase activity"/>
    <property type="evidence" value="ECO:0007669"/>
    <property type="project" value="UniProtKB-EC"/>
</dbReference>
<dbReference type="GO" id="GO:0009820">
    <property type="term" value="P:alkaloid metabolic process"/>
    <property type="evidence" value="ECO:0007669"/>
    <property type="project" value="UniProtKB-KW"/>
</dbReference>
<dbReference type="GO" id="GO:0019608">
    <property type="term" value="P:nicotine catabolic process"/>
    <property type="evidence" value="ECO:0007669"/>
    <property type="project" value="UniProtKB-UniPathway"/>
</dbReference>
<dbReference type="CDD" id="cd00207">
    <property type="entry name" value="fer2"/>
    <property type="match status" value="1"/>
</dbReference>
<dbReference type="FunFam" id="1.10.150.120:FF:000003">
    <property type="entry name" value="Carbon monoxide dehydrogenase, small subunit"/>
    <property type="match status" value="1"/>
</dbReference>
<dbReference type="FunFam" id="3.10.20.30:FF:000020">
    <property type="entry name" value="Xanthine dehydrogenase iron-sulfur subunit"/>
    <property type="match status" value="1"/>
</dbReference>
<dbReference type="Gene3D" id="3.10.20.30">
    <property type="match status" value="1"/>
</dbReference>
<dbReference type="Gene3D" id="1.10.150.120">
    <property type="entry name" value="[2Fe-2S]-binding domain"/>
    <property type="match status" value="1"/>
</dbReference>
<dbReference type="InterPro" id="IPR002888">
    <property type="entry name" value="2Fe-2S-bd"/>
</dbReference>
<dbReference type="InterPro" id="IPR036884">
    <property type="entry name" value="2Fe-2S-bd_dom_sf"/>
</dbReference>
<dbReference type="InterPro" id="IPR036010">
    <property type="entry name" value="2Fe-2S_ferredoxin-like_sf"/>
</dbReference>
<dbReference type="InterPro" id="IPR001041">
    <property type="entry name" value="2Fe-2S_ferredoxin-type"/>
</dbReference>
<dbReference type="InterPro" id="IPR006058">
    <property type="entry name" value="2Fe2S_fd_BS"/>
</dbReference>
<dbReference type="InterPro" id="IPR012675">
    <property type="entry name" value="Beta-grasp_dom_sf"/>
</dbReference>
<dbReference type="InterPro" id="IPR051452">
    <property type="entry name" value="Diverse_Oxidoreductases"/>
</dbReference>
<dbReference type="PANTHER" id="PTHR44379">
    <property type="entry name" value="OXIDOREDUCTASE WITH IRON-SULFUR SUBUNIT"/>
    <property type="match status" value="1"/>
</dbReference>
<dbReference type="PANTHER" id="PTHR44379:SF8">
    <property type="entry name" value="XANTHINE DEHYDROGENASE IRON-SULFUR-BINDING SUBUNIT XDHC-RELATED"/>
    <property type="match status" value="1"/>
</dbReference>
<dbReference type="Pfam" id="PF00111">
    <property type="entry name" value="Fer2"/>
    <property type="match status" value="1"/>
</dbReference>
<dbReference type="Pfam" id="PF01799">
    <property type="entry name" value="Fer2_2"/>
    <property type="match status" value="1"/>
</dbReference>
<dbReference type="SUPFAM" id="SSF54292">
    <property type="entry name" value="2Fe-2S ferredoxin-like"/>
    <property type="match status" value="1"/>
</dbReference>
<dbReference type="SUPFAM" id="SSF47741">
    <property type="entry name" value="CO dehydrogenase ISP C-domain like"/>
    <property type="match status" value="1"/>
</dbReference>
<dbReference type="PROSITE" id="PS00197">
    <property type="entry name" value="2FE2S_FER_1"/>
    <property type="match status" value="1"/>
</dbReference>
<dbReference type="PROSITE" id="PS51085">
    <property type="entry name" value="2FE2S_FER_2"/>
    <property type="match status" value="1"/>
</dbReference>
<sequence>MTTPSPSDRVEIDVEVNGRRRTVAVDARETLADHLRNDQKLTGIKLGCEHGVCGACTILMDGAAVRSCLTLAAQGDGRSIRTVEDLSDGALSPLQEAFKRHHALQCGFCTAGFLMSATELLEANPSPTKEEVIEALSGNLCRCTGYQTIVEAVLDAPGQIGNKNG</sequence>
<comment type="function">
    <text evidence="2 3">Component of the nicotine 6-hydroxylase, which is involved in the degradation of nicotine (PubMed:5849820, PubMed:7815950). Catalyzes the hydroxylation of the pyridine ring at C6 to form 6-hydroxynicotine (PubMed:5849820, PubMed:7815950). Can use both L-nicotine and D-nicotine (PubMed:5849820, PubMed:7815950).</text>
</comment>
<comment type="catalytic activity">
    <reaction evidence="2 3">
        <text>(R)-nicotine + A + H2O = (R)-6-hydroxynicotine + AH2</text>
        <dbReference type="Rhea" id="RHEA:42352"/>
        <dbReference type="ChEBI" id="CHEBI:13193"/>
        <dbReference type="ChEBI" id="CHEBI:15377"/>
        <dbReference type="ChEBI" id="CHEBI:17499"/>
        <dbReference type="ChEBI" id="CHEBI:58413"/>
        <dbReference type="ChEBI" id="CHEBI:79008"/>
        <dbReference type="EC" id="1.5.99.4"/>
    </reaction>
    <physiologicalReaction direction="left-to-right" evidence="2 3">
        <dbReference type="Rhea" id="RHEA:42353"/>
    </physiologicalReaction>
</comment>
<comment type="catalytic activity">
    <reaction evidence="2 3">
        <text>(S)-nicotine + A + H2O = (S)-6-hydroxynicotine + AH2</text>
        <dbReference type="Rhea" id="RHEA:14769"/>
        <dbReference type="ChEBI" id="CHEBI:13193"/>
        <dbReference type="ChEBI" id="CHEBI:15377"/>
        <dbReference type="ChEBI" id="CHEBI:17499"/>
        <dbReference type="ChEBI" id="CHEBI:58182"/>
        <dbReference type="ChEBI" id="CHEBI:59806"/>
        <dbReference type="EC" id="1.5.99.4"/>
    </reaction>
    <physiologicalReaction direction="left-to-right" evidence="2 3">
        <dbReference type="Rhea" id="RHEA:14770"/>
    </physiologicalReaction>
</comment>
<comment type="cofactor">
    <cofactor evidence="1">
        <name>[2Fe-2S] cluster</name>
        <dbReference type="ChEBI" id="CHEBI:190135"/>
    </cofactor>
    <text evidence="1">Binds 1 2Fe-2S cluster.</text>
</comment>
<comment type="activity regulation">
    <text evidence="3">Nicotine dehydrogenase activity is inhibited by tungsten.</text>
</comment>
<comment type="pathway">
    <text evidence="8">Alkaloid degradation; nicotine degradation; 6-hydroxypseudooxynicotine from nicotine (R-isomer route): step 1/2.</text>
</comment>
<comment type="pathway">
    <text evidence="8">Alkaloid degradation; nicotine degradation; 6-hydroxypseudooxynicotine from nicotine (S-isomer route): step 1/2.</text>
</comment>
<comment type="subunit">
    <text evidence="3">Heterotrimer composed of a large subunit (NdhL), a medium subunit (NdhM) and a small subunit (NdhS).</text>
</comment>
<comment type="subcellular location">
    <subcellularLocation>
        <location evidence="3">Cytoplasm</location>
    </subcellularLocation>
    <text evidence="3">Also present in a membrane-associated form (PubMed:7815950). The presence of tungstate increases the proportion of membrane-bound enzyme (PubMed:7815950).</text>
</comment>
<comment type="induction">
    <text evidence="3">Expression requires the presence of nicotine and molybdenum.</text>
</comment>
<comment type="biotechnology">
    <text evidence="5">Due to the increased usage of tobacco products, the industry generates solid and liquid tobacco wastes containing high concentrations of nicotine, which dissolves easily in water leading to the contamination of the ground water (PubMed:24470788). Nicotine-degrading microbes can be used for bioremediation of these nicotine-polluted environments (PubMed:24470788).</text>
</comment>
<accession>Q59128</accession>
<organism>
    <name type="scientific">Paenarthrobacter nicotinovorans</name>
    <name type="common">Arthrobacter nicotinovorans</name>
    <dbReference type="NCBI Taxonomy" id="29320"/>
    <lineage>
        <taxon>Bacteria</taxon>
        <taxon>Bacillati</taxon>
        <taxon>Actinomycetota</taxon>
        <taxon>Actinomycetes</taxon>
        <taxon>Micrococcales</taxon>
        <taxon>Micrococcaceae</taxon>
        <taxon>Paenarthrobacter</taxon>
    </lineage>
</organism>
<name>NDHS_PAENI</name>
<evidence type="ECO:0000255" key="1">
    <source>
        <dbReference type="PROSITE-ProRule" id="PRU00465"/>
    </source>
</evidence>
<evidence type="ECO:0000269" key="2">
    <source>
    </source>
</evidence>
<evidence type="ECO:0000269" key="3">
    <source>
    </source>
</evidence>
<evidence type="ECO:0000303" key="4">
    <source>
    </source>
</evidence>
<evidence type="ECO:0000303" key="5">
    <source>
    </source>
</evidence>
<evidence type="ECO:0000303" key="6">
    <source>
    </source>
</evidence>
<evidence type="ECO:0000305" key="7"/>
<evidence type="ECO:0000305" key="8">
    <source>
    </source>
</evidence>
<evidence type="ECO:0000312" key="9">
    <source>
        <dbReference type="EMBL" id="AAK64244.1"/>
    </source>
</evidence>
<evidence type="ECO:0000312" key="10">
    <source>
        <dbReference type="EMBL" id="CAA53087.1"/>
    </source>
</evidence>
<evidence type="ECO:0000312" key="11">
    <source>
        <dbReference type="EMBL" id="CAD47953.1"/>
    </source>
</evidence>
<reference evidence="10" key="1">
    <citation type="journal article" date="1994" name="Mol. Microbiol.">
        <title>Structural analysis and molybdenum-dependent expression of the pAO1-encoded nicotine dehydrogenase genes of Arthrobacter nicotinovorans.</title>
        <authorList>
            <person name="Grether-Beck S."/>
            <person name="Igloi G.L."/>
            <person name="Pust S."/>
            <person name="Schiltz E."/>
            <person name="Decker K."/>
            <person name="Brandsch R."/>
        </authorList>
    </citation>
    <scope>NUCLEOTIDE SEQUENCE [GENOMIC DNA]</scope>
    <scope>FUNCTION</scope>
    <scope>CATALYTIC ACTIVITY</scope>
    <scope>ACTIVITY REGULATION</scope>
    <scope>SUBUNIT</scope>
    <scope>SUBCELLULAR LOCATION</scope>
    <scope>INDUCTION</scope>
</reference>
<reference evidence="9" key="2">
    <citation type="journal article" date="2001" name="J. Bacteriol.">
        <title>Gene cluster on pAO1 of Arthrobacter nicotinovorans involved in degradation of the plant alkaloid nicotine: cloning, purification, and characterization of 2,6-dihydroxypyridine 3-hydroxylase.</title>
        <authorList>
            <person name="Baitsch D."/>
            <person name="Sandu C."/>
            <person name="Brandsch R."/>
            <person name="Igloi G.L."/>
        </authorList>
    </citation>
    <scope>NUCLEOTIDE SEQUENCE [GENOMIC DNA]</scope>
    <source>
        <strain>ATCC 49919 / DSM 420 / JCM 3874 / KCTC 9902 / LMG 16253 / NBRC 15511</strain>
        <plasmid>pAO1</plasmid>
    </source>
</reference>
<reference evidence="11" key="3">
    <citation type="journal article" date="2003" name="J. Bacteriol.">
        <title>Sequence of the 165-kilobase catabolic plasmid pAO1 from Arthrobacter nicotinovorans and identification of a pAO1-dependent nicotine uptake system.</title>
        <authorList>
            <person name="Igloi G.L."/>
            <person name="Brandsch R."/>
        </authorList>
    </citation>
    <scope>NUCLEOTIDE SEQUENCE [LARGE SCALE GENOMIC DNA]</scope>
    <source>
        <strain>ATCC 49919 / DSM 420 / JCM 3874 / KCTC 9902 / LMG 16253 / NBRC 15511</strain>
        <plasmid>pAO1</plasmid>
    </source>
</reference>
<reference key="4">
    <citation type="journal article" date="1965" name="Biochim. Biophys. Acta">
        <title>Induction and purification of stereospecific nicotine oxidizing enzymes from Arthrobacter oxidans.</title>
        <authorList>
            <person name="Decker K."/>
            <person name="Bleeg H."/>
        </authorList>
    </citation>
    <scope>FUNCTION</scope>
    <scope>CATALYTIC ACTIVITY</scope>
</reference>
<reference key="5">
    <citation type="journal article" date="2013" name="ScientificWorldJournal">
        <title>Current status on biochemistry and molecular biology of microbial degradation of nicotine.</title>
        <authorList>
            <person name="Gurusamy R."/>
            <person name="Natarajan S."/>
        </authorList>
    </citation>
    <scope>BIOTECHNOLOGY</scope>
    <scope>REVIEW</scope>
</reference>
<keyword id="KW-0001">2Fe-2S</keyword>
<keyword id="KW-0017">Alkaloid metabolism</keyword>
<keyword id="KW-0963">Cytoplasm</keyword>
<keyword id="KW-0408">Iron</keyword>
<keyword id="KW-0411">Iron-sulfur</keyword>
<keyword id="KW-0479">Metal-binding</keyword>
<keyword id="KW-0560">Oxidoreductase</keyword>
<keyword id="KW-0614">Plasmid</keyword>